<reference key="1">
    <citation type="journal article" date="2003" name="Proc. Natl. Acad. Sci. U.S.A.">
        <title>The complete genome sequence of Mycobacterium bovis.</title>
        <authorList>
            <person name="Garnier T."/>
            <person name="Eiglmeier K."/>
            <person name="Camus J.-C."/>
            <person name="Medina N."/>
            <person name="Mansoor H."/>
            <person name="Pryor M."/>
            <person name="Duthoy S."/>
            <person name="Grondin S."/>
            <person name="Lacroix C."/>
            <person name="Monsempe C."/>
            <person name="Simon S."/>
            <person name="Harris B."/>
            <person name="Atkin R."/>
            <person name="Doggett J."/>
            <person name="Mayes R."/>
            <person name="Keating L."/>
            <person name="Wheeler P.R."/>
            <person name="Parkhill J."/>
            <person name="Barrell B.G."/>
            <person name="Cole S.T."/>
            <person name="Gordon S.V."/>
            <person name="Hewinson R.G."/>
        </authorList>
    </citation>
    <scope>NUCLEOTIDE SEQUENCE [LARGE SCALE GENOMIC DNA]</scope>
    <source>
        <strain>ATCC BAA-935 / AF2122/97</strain>
    </source>
</reference>
<reference key="2">
    <citation type="journal article" date="2017" name="Genome Announc.">
        <title>Updated reference genome sequence and annotation of Mycobacterium bovis AF2122/97.</title>
        <authorList>
            <person name="Malone K.M."/>
            <person name="Farrell D."/>
            <person name="Stuber T.P."/>
            <person name="Schubert O.T."/>
            <person name="Aebersold R."/>
            <person name="Robbe-Austerman S."/>
            <person name="Gordon S.V."/>
        </authorList>
    </citation>
    <scope>NUCLEOTIDE SEQUENCE [LARGE SCALE GENOMIC DNA]</scope>
    <scope>GENOME REANNOTATION</scope>
    <source>
        <strain>ATCC BAA-935 / AF2122/97</strain>
    </source>
</reference>
<accession>P64954</accession>
<accession>A0A1R3Y0K5</accession>
<accession>Q10398</accession>
<accession>X2BKE5</accession>
<organism>
    <name type="scientific">Mycobacterium bovis (strain ATCC BAA-935 / AF2122/97)</name>
    <dbReference type="NCBI Taxonomy" id="233413"/>
    <lineage>
        <taxon>Bacteria</taxon>
        <taxon>Bacillati</taxon>
        <taxon>Actinomycetota</taxon>
        <taxon>Actinomycetes</taxon>
        <taxon>Mycobacteriales</taxon>
        <taxon>Mycobacteriaceae</taxon>
        <taxon>Mycobacterium</taxon>
        <taxon>Mycobacterium tuberculosis complex</taxon>
    </lineage>
</organism>
<evidence type="ECO:0000255" key="1"/>
<evidence type="ECO:0000256" key="2">
    <source>
        <dbReference type="SAM" id="MobiDB-lite"/>
    </source>
</evidence>
<evidence type="ECO:0000305" key="3"/>
<feature type="chain" id="PRO_0000103978" description="Uncharacterized protein Mb2232">
    <location>
        <begin position="1"/>
        <end position="512"/>
    </location>
</feature>
<feature type="transmembrane region" description="Helical" evidence="1">
    <location>
        <begin position="25"/>
        <end position="45"/>
    </location>
</feature>
<feature type="transmembrane region" description="Helical" evidence="1">
    <location>
        <begin position="55"/>
        <end position="75"/>
    </location>
</feature>
<feature type="transmembrane region" description="Helical" evidence="1">
    <location>
        <begin position="96"/>
        <end position="116"/>
    </location>
</feature>
<feature type="transmembrane region" description="Helical" evidence="1">
    <location>
        <begin position="123"/>
        <end position="143"/>
    </location>
</feature>
<feature type="transmembrane region" description="Helical" evidence="1">
    <location>
        <begin position="148"/>
        <end position="168"/>
    </location>
</feature>
<feature type="transmembrane region" description="Helical" evidence="1">
    <location>
        <begin position="183"/>
        <end position="203"/>
    </location>
</feature>
<feature type="transmembrane region" description="Helical" evidence="1">
    <location>
        <begin position="238"/>
        <end position="258"/>
    </location>
</feature>
<feature type="transmembrane region" description="Helical" evidence="1">
    <location>
        <begin position="263"/>
        <end position="283"/>
    </location>
</feature>
<feature type="transmembrane region" description="Helical" evidence="1">
    <location>
        <begin position="294"/>
        <end position="314"/>
    </location>
</feature>
<feature type="transmembrane region" description="Helical" evidence="1">
    <location>
        <begin position="329"/>
        <end position="349"/>
    </location>
</feature>
<feature type="transmembrane region" description="Helical" evidence="1">
    <location>
        <begin position="359"/>
        <end position="379"/>
    </location>
</feature>
<feature type="transmembrane region" description="Helical" evidence="1">
    <location>
        <begin position="386"/>
        <end position="406"/>
    </location>
</feature>
<feature type="region of interest" description="Disordered" evidence="2">
    <location>
        <begin position="428"/>
        <end position="512"/>
    </location>
</feature>
<comment type="subcellular location">
    <subcellularLocation>
        <location evidence="3">Cell membrane</location>
        <topology evidence="3">Multi-pass membrane protein</topology>
    </subcellularLocation>
</comment>
<name>Y2232_MYCBO</name>
<proteinExistence type="predicted"/>
<dbReference type="EMBL" id="LT708304">
    <property type="protein sequence ID" value="SIU00840.1"/>
    <property type="molecule type" value="Genomic_DNA"/>
</dbReference>
<dbReference type="RefSeq" id="NP_855881.1">
    <property type="nucleotide sequence ID" value="NC_002945.3"/>
</dbReference>
<dbReference type="RefSeq" id="WP_003899218.1">
    <property type="nucleotide sequence ID" value="NC_002945.4"/>
</dbReference>
<dbReference type="SMR" id="P64954"/>
<dbReference type="KEGG" id="mbo:BQ2027_MB2232"/>
<dbReference type="Proteomes" id="UP000001419">
    <property type="component" value="Chromosome"/>
</dbReference>
<dbReference type="GO" id="GO:0005886">
    <property type="term" value="C:plasma membrane"/>
    <property type="evidence" value="ECO:0007669"/>
    <property type="project" value="UniProtKB-SubCell"/>
</dbReference>
<dbReference type="Gene3D" id="1.20.1250.20">
    <property type="entry name" value="MFS general substrate transporter like domains"/>
    <property type="match status" value="1"/>
</dbReference>
<dbReference type="InterPro" id="IPR036259">
    <property type="entry name" value="MFS_trans_sf"/>
</dbReference>
<dbReference type="SUPFAM" id="SSF103473">
    <property type="entry name" value="MFS general substrate transporter"/>
    <property type="match status" value="1"/>
</dbReference>
<sequence length="512" mass="53579">MPASRLVRQVSAPRNLFGRLVAQGGFYTAGLQLGSGAVVLPVICAHQGLTWAAGLLYPAFCIGAILGNSLSPLILQRAGQLRHLLMAAISATAAALVVCNAAVPWTGVGVAAVFLATTGAGGVVTGVSSVAYTDMISSMLPAVRRGELLLTQGAAGSVLATGVTLVIVPMLAHGNEMARYHDLLWLGAAGLVCSGIAALFVGPMRSVSVTTATRMPLREIYWMGFAIARSQPWFRRYMTTYLLFVPISLGTTFFSLRAAQSNGSLHVLVILSSIGLVVGSMLWRQINRLFGVRGLLLGSALLNAAAALLCMVAESCGQWVHAWAYGTAFLLATVAAQTVVAASISWISVLAPERYRATLICVGSTLAAVEATVLGVALGGIAQKHATIWPVVVVLTLAVIAAVASLRAPTRIGVTADTSPQAATLQAYRPATPNPIHSDERSTPPDHLSVRRGQLRHVWDSRRPAPPLNRPSCRRAARRPAPGKPAAALPQPRHPAVGVREGAPLDAGQRIA</sequence>
<gene>
    <name type="ordered locus">BQ2027_MB2232</name>
</gene>
<protein>
    <recommendedName>
        <fullName>Uncharacterized protein Mb2232</fullName>
    </recommendedName>
</protein>
<keyword id="KW-1003">Cell membrane</keyword>
<keyword id="KW-0472">Membrane</keyword>
<keyword id="KW-1185">Reference proteome</keyword>
<keyword id="KW-0812">Transmembrane</keyword>
<keyword id="KW-1133">Transmembrane helix</keyword>